<keyword id="KW-0378">Hydrolase</keyword>
<keyword id="KW-0479">Metal-binding</keyword>
<keyword id="KW-0665">Pyrimidine biosynthesis</keyword>
<keyword id="KW-0862">Zinc</keyword>
<comment type="function">
    <text evidence="1">Catalyzes the reversible cyclization of carbamoyl aspartate to dihydroorotate.</text>
</comment>
<comment type="catalytic activity">
    <reaction evidence="1">
        <text>(S)-dihydroorotate + H2O = N-carbamoyl-L-aspartate + H(+)</text>
        <dbReference type="Rhea" id="RHEA:24296"/>
        <dbReference type="ChEBI" id="CHEBI:15377"/>
        <dbReference type="ChEBI" id="CHEBI:15378"/>
        <dbReference type="ChEBI" id="CHEBI:30864"/>
        <dbReference type="ChEBI" id="CHEBI:32814"/>
        <dbReference type="EC" id="3.5.2.3"/>
    </reaction>
</comment>
<comment type="cofactor">
    <cofactor evidence="1">
        <name>Zn(2+)</name>
        <dbReference type="ChEBI" id="CHEBI:29105"/>
    </cofactor>
    <text evidence="1">Binds 2 Zn(2+) ions per subunit.</text>
</comment>
<comment type="pathway">
    <text evidence="1">Pyrimidine metabolism; UMP biosynthesis via de novo pathway; (S)-dihydroorotate from bicarbonate: step 3/3.</text>
</comment>
<comment type="subunit">
    <text evidence="1">Homodimer.</text>
</comment>
<comment type="similarity">
    <text evidence="1">Belongs to the metallo-dependent hydrolases superfamily. DHOase family. Class II DHOase subfamily.</text>
</comment>
<organism>
    <name type="scientific">Aliivibrio salmonicida (strain LFI1238)</name>
    <name type="common">Vibrio salmonicida (strain LFI1238)</name>
    <dbReference type="NCBI Taxonomy" id="316275"/>
    <lineage>
        <taxon>Bacteria</taxon>
        <taxon>Pseudomonadati</taxon>
        <taxon>Pseudomonadota</taxon>
        <taxon>Gammaproteobacteria</taxon>
        <taxon>Vibrionales</taxon>
        <taxon>Vibrionaceae</taxon>
        <taxon>Aliivibrio</taxon>
    </lineage>
</organism>
<dbReference type="EC" id="3.5.2.3" evidence="1"/>
<dbReference type="EMBL" id="FM178380">
    <property type="protein sequence ID" value="CAQ81222.1"/>
    <property type="molecule type" value="Genomic_DNA"/>
</dbReference>
<dbReference type="RefSeq" id="WP_012551804.1">
    <property type="nucleotide sequence ID" value="NC_011313.1"/>
</dbReference>
<dbReference type="SMR" id="B6ER91"/>
<dbReference type="MEROPS" id="M38.A02"/>
<dbReference type="KEGG" id="vsa:VSAL_II0468"/>
<dbReference type="eggNOG" id="COG0418">
    <property type="taxonomic scope" value="Bacteria"/>
</dbReference>
<dbReference type="HOGENOM" id="CLU_041558_1_0_6"/>
<dbReference type="UniPathway" id="UPA00070">
    <property type="reaction ID" value="UER00117"/>
</dbReference>
<dbReference type="Proteomes" id="UP000001730">
    <property type="component" value="Chromosome 2"/>
</dbReference>
<dbReference type="GO" id="GO:0005829">
    <property type="term" value="C:cytosol"/>
    <property type="evidence" value="ECO:0007669"/>
    <property type="project" value="TreeGrafter"/>
</dbReference>
<dbReference type="GO" id="GO:0004151">
    <property type="term" value="F:dihydroorotase activity"/>
    <property type="evidence" value="ECO:0007669"/>
    <property type="project" value="UniProtKB-UniRule"/>
</dbReference>
<dbReference type="GO" id="GO:0008270">
    <property type="term" value="F:zinc ion binding"/>
    <property type="evidence" value="ECO:0007669"/>
    <property type="project" value="UniProtKB-UniRule"/>
</dbReference>
<dbReference type="GO" id="GO:0006207">
    <property type="term" value="P:'de novo' pyrimidine nucleobase biosynthetic process"/>
    <property type="evidence" value="ECO:0007669"/>
    <property type="project" value="TreeGrafter"/>
</dbReference>
<dbReference type="GO" id="GO:0044205">
    <property type="term" value="P:'de novo' UMP biosynthetic process"/>
    <property type="evidence" value="ECO:0007669"/>
    <property type="project" value="UniProtKB-UniRule"/>
</dbReference>
<dbReference type="CDD" id="cd01294">
    <property type="entry name" value="DHOase"/>
    <property type="match status" value="1"/>
</dbReference>
<dbReference type="FunFam" id="3.20.20.140:FF:000006">
    <property type="entry name" value="Dihydroorotase"/>
    <property type="match status" value="1"/>
</dbReference>
<dbReference type="Gene3D" id="3.20.20.140">
    <property type="entry name" value="Metal-dependent hydrolases"/>
    <property type="match status" value="1"/>
</dbReference>
<dbReference type="HAMAP" id="MF_00219">
    <property type="entry name" value="PyrC_classII"/>
    <property type="match status" value="1"/>
</dbReference>
<dbReference type="InterPro" id="IPR006680">
    <property type="entry name" value="Amidohydro-rel"/>
</dbReference>
<dbReference type="InterPro" id="IPR004721">
    <property type="entry name" value="DHOdimr"/>
</dbReference>
<dbReference type="InterPro" id="IPR002195">
    <property type="entry name" value="Dihydroorotase_CS"/>
</dbReference>
<dbReference type="InterPro" id="IPR032466">
    <property type="entry name" value="Metal_Hydrolase"/>
</dbReference>
<dbReference type="NCBIfam" id="TIGR00856">
    <property type="entry name" value="pyrC_dimer"/>
    <property type="match status" value="1"/>
</dbReference>
<dbReference type="PANTHER" id="PTHR43137">
    <property type="entry name" value="DIHYDROOROTASE"/>
    <property type="match status" value="1"/>
</dbReference>
<dbReference type="PANTHER" id="PTHR43137:SF1">
    <property type="entry name" value="DIHYDROOROTASE"/>
    <property type="match status" value="1"/>
</dbReference>
<dbReference type="Pfam" id="PF01979">
    <property type="entry name" value="Amidohydro_1"/>
    <property type="match status" value="1"/>
</dbReference>
<dbReference type="PIRSF" id="PIRSF001237">
    <property type="entry name" value="DHOdimr"/>
    <property type="match status" value="1"/>
</dbReference>
<dbReference type="SUPFAM" id="SSF51556">
    <property type="entry name" value="Metallo-dependent hydrolases"/>
    <property type="match status" value="1"/>
</dbReference>
<dbReference type="PROSITE" id="PS00482">
    <property type="entry name" value="DIHYDROOROTASE_1"/>
    <property type="match status" value="1"/>
</dbReference>
<dbReference type="PROSITE" id="PS00483">
    <property type="entry name" value="DIHYDROOROTASE_2"/>
    <property type="match status" value="1"/>
</dbReference>
<accession>B6ER91</accession>
<sequence>MTTLTITRPDDWHLHLRDGDVLTDTVRDSGRYNGRALIMPNLVPPVITTEQALSYRERIQAVNSSNTFAPIMSLYLTEKTTSDEIRKAKATGYIVAAKLYPAGATTNSDSGVSDVQKVYPILKTMQEEGMLLLIHGEVTTHDIDIFDREKTFLDTVLAPIVNDFPELKIVLEHITTKDAADFVKNAGPNVAATITAHHLLFNRNHMLVGGIKPHFYCLPILKRNTHQLALIEAATSGSPKFFLGTDSAPHSKEKKEAACGCAGSYTAHASIELYTEVFENEGKLDNLEAFASFNGPDFYNLPRNTDTITLVKEAWITPETMSFGNDVVVPIRAGEAVEWLVK</sequence>
<evidence type="ECO:0000255" key="1">
    <source>
        <dbReference type="HAMAP-Rule" id="MF_00219"/>
    </source>
</evidence>
<reference key="1">
    <citation type="journal article" date="2008" name="BMC Genomics">
        <title>The genome sequence of the fish pathogen Aliivibrio salmonicida strain LFI1238 shows extensive evidence of gene decay.</title>
        <authorList>
            <person name="Hjerde E."/>
            <person name="Lorentzen M.S."/>
            <person name="Holden M.T."/>
            <person name="Seeger K."/>
            <person name="Paulsen S."/>
            <person name="Bason N."/>
            <person name="Churcher C."/>
            <person name="Harris D."/>
            <person name="Norbertczak H."/>
            <person name="Quail M.A."/>
            <person name="Sanders S."/>
            <person name="Thurston S."/>
            <person name="Parkhill J."/>
            <person name="Willassen N.P."/>
            <person name="Thomson N.R."/>
        </authorList>
    </citation>
    <scope>NUCLEOTIDE SEQUENCE [LARGE SCALE GENOMIC DNA]</scope>
    <source>
        <strain>LFI1238</strain>
    </source>
</reference>
<gene>
    <name evidence="1" type="primary">pyrC</name>
    <name type="ordered locus">VSAL_II0468</name>
</gene>
<protein>
    <recommendedName>
        <fullName evidence="1">Dihydroorotase</fullName>
        <shortName evidence="1">DHOase</shortName>
        <ecNumber evidence="1">3.5.2.3</ecNumber>
    </recommendedName>
</protein>
<name>PYRC_ALISL</name>
<proteinExistence type="inferred from homology"/>
<feature type="chain" id="PRO_1000100036" description="Dihydroorotase">
    <location>
        <begin position="1"/>
        <end position="342"/>
    </location>
</feature>
<feature type="active site" evidence="1">
    <location>
        <position position="246"/>
    </location>
</feature>
<feature type="binding site" evidence="1">
    <location>
        <position position="13"/>
    </location>
    <ligand>
        <name>Zn(2+)</name>
        <dbReference type="ChEBI" id="CHEBI:29105"/>
        <label>1</label>
    </ligand>
</feature>
<feature type="binding site" evidence="1">
    <location>
        <begin position="15"/>
        <end position="17"/>
    </location>
    <ligand>
        <name>substrate</name>
    </ligand>
</feature>
<feature type="binding site" evidence="1">
    <location>
        <position position="15"/>
    </location>
    <ligand>
        <name>Zn(2+)</name>
        <dbReference type="ChEBI" id="CHEBI:29105"/>
        <label>1</label>
    </ligand>
</feature>
<feature type="binding site" evidence="1">
    <location>
        <position position="41"/>
    </location>
    <ligand>
        <name>substrate</name>
    </ligand>
</feature>
<feature type="binding site" description="via carbamate group" evidence="1">
    <location>
        <position position="98"/>
    </location>
    <ligand>
        <name>Zn(2+)</name>
        <dbReference type="ChEBI" id="CHEBI:29105"/>
        <label>1</label>
    </ligand>
</feature>
<feature type="binding site" description="via carbamate group" evidence="1">
    <location>
        <position position="98"/>
    </location>
    <ligand>
        <name>Zn(2+)</name>
        <dbReference type="ChEBI" id="CHEBI:29105"/>
        <label>2</label>
    </ligand>
</feature>
<feature type="binding site" evidence="1">
    <location>
        <position position="135"/>
    </location>
    <ligand>
        <name>substrate</name>
    </ligand>
</feature>
<feature type="binding site" evidence="1">
    <location>
        <position position="135"/>
    </location>
    <ligand>
        <name>Zn(2+)</name>
        <dbReference type="ChEBI" id="CHEBI:29105"/>
        <label>2</label>
    </ligand>
</feature>
<feature type="binding site" evidence="1">
    <location>
        <position position="173"/>
    </location>
    <ligand>
        <name>Zn(2+)</name>
        <dbReference type="ChEBI" id="CHEBI:29105"/>
        <label>2</label>
    </ligand>
</feature>
<feature type="binding site" evidence="1">
    <location>
        <position position="218"/>
    </location>
    <ligand>
        <name>substrate</name>
    </ligand>
</feature>
<feature type="binding site" evidence="1">
    <location>
        <position position="246"/>
    </location>
    <ligand>
        <name>Zn(2+)</name>
        <dbReference type="ChEBI" id="CHEBI:29105"/>
        <label>1</label>
    </ligand>
</feature>
<feature type="binding site" evidence="1">
    <location>
        <position position="250"/>
    </location>
    <ligand>
        <name>substrate</name>
    </ligand>
</feature>
<feature type="binding site" evidence="1">
    <location>
        <position position="262"/>
    </location>
    <ligand>
        <name>substrate</name>
    </ligand>
</feature>
<feature type="modified residue" description="N6-carboxylysine" evidence="1">
    <location>
        <position position="98"/>
    </location>
</feature>